<protein>
    <recommendedName>
        <fullName evidence="1">SH2 domain-containing protein 5</fullName>
    </recommendedName>
</protein>
<sequence length="423" mass="46225">MQKAGAGGRRASDCGLAPHRPRCITKFAQYVGLLPCGRPGHPGERVAGAAAAVGAEDCPRRRAVILKFSLQGLKIYSGEGEVLLMAHALRRILYSTWCPADCQFAFVARNPRSPASKFFCHLFVGSQPGEVQILHLLLCRSFQLAYLLQHPEERAQPEPCPGPTGEVPLKPLSSSGGLVREPFGRDQLSQNVHALVSFRRLPAEGLVGSGKELPESEGRARHARLGNPYCSPTLVRKKAIRSKVIRSGAYRGCTYETQLQLSAREAFPAAWEAWPRGPGGHSCLVESEGSLTENIWAFAGISRPCALALLRRDVLGAFLLWPELGASGQWCLSVRTQCGVVPHQVFRNHLGRYCLEHLPAEFPSLEALVENHAVTERSLFCPLDMGRLNPTYEEQDCGPLGRPPRTLRPLSHAKSEAELQGLG</sequence>
<evidence type="ECO:0000250" key="1">
    <source>
        <dbReference type="UniProtKB" id="Q6ZV89"/>
    </source>
</evidence>
<evidence type="ECO:0000250" key="2">
    <source>
        <dbReference type="UniProtKB" id="Q8JZW5"/>
    </source>
</evidence>
<evidence type="ECO:0000255" key="3">
    <source>
        <dbReference type="PROSITE-ProRule" id="PRU00148"/>
    </source>
</evidence>
<evidence type="ECO:0000255" key="4">
    <source>
        <dbReference type="PROSITE-ProRule" id="PRU00191"/>
    </source>
</evidence>
<evidence type="ECO:0000256" key="5">
    <source>
        <dbReference type="SAM" id="MobiDB-lite"/>
    </source>
</evidence>
<proteinExistence type="evidence at transcript level"/>
<gene>
    <name evidence="1" type="primary">SH2D5</name>
</gene>
<comment type="function">
    <text evidence="2">May be involved in synaptic plasticity regulation through the control of Rac-GTP levels.</text>
</comment>
<comment type="subunit">
    <text evidence="1">Interacts with BCR (By similarity).</text>
</comment>
<comment type="subcellular location">
    <subcellularLocation>
        <location evidence="2">Postsynaptic density</location>
    </subcellularLocation>
</comment>
<accession>Q5R732</accession>
<accession>A0A0A0MXM4</accession>
<dbReference type="EMBL" id="ABGA01080291">
    <property type="status" value="NOT_ANNOTATED_CDS"/>
    <property type="molecule type" value="Genomic_DNA"/>
</dbReference>
<dbReference type="EMBL" id="ABGA01080292">
    <property type="status" value="NOT_ANNOTATED_CDS"/>
    <property type="molecule type" value="Genomic_DNA"/>
</dbReference>
<dbReference type="EMBL" id="CR860288">
    <property type="protein sequence ID" value="CAH92428.1"/>
    <property type="molecule type" value="mRNA"/>
</dbReference>
<dbReference type="SMR" id="Q5R732"/>
<dbReference type="FunCoup" id="Q5R732">
    <property type="interactions" value="106"/>
</dbReference>
<dbReference type="STRING" id="9601.ENSPPYP00000002047"/>
<dbReference type="eggNOG" id="ENOG502RXFM">
    <property type="taxonomic scope" value="Eukaryota"/>
</dbReference>
<dbReference type="HOGENOM" id="CLU_053535_0_0_1"/>
<dbReference type="InParanoid" id="Q5R732"/>
<dbReference type="Proteomes" id="UP000001595">
    <property type="component" value="Unplaced"/>
</dbReference>
<dbReference type="GO" id="GO:0014069">
    <property type="term" value="C:postsynaptic density"/>
    <property type="evidence" value="ECO:0000250"/>
    <property type="project" value="UniProtKB"/>
</dbReference>
<dbReference type="CDD" id="cd13157">
    <property type="entry name" value="PTB_tensin-related"/>
    <property type="match status" value="1"/>
</dbReference>
<dbReference type="CDD" id="cd00173">
    <property type="entry name" value="SH2"/>
    <property type="match status" value="1"/>
</dbReference>
<dbReference type="FunFam" id="3.30.505.10:FF:000072">
    <property type="entry name" value="SH2 domain-containing protein 5"/>
    <property type="match status" value="1"/>
</dbReference>
<dbReference type="Gene3D" id="2.30.29.30">
    <property type="entry name" value="Pleckstrin-homology domain (PH domain)/Phosphotyrosine-binding domain (PTB)"/>
    <property type="match status" value="1"/>
</dbReference>
<dbReference type="Gene3D" id="3.30.505.10">
    <property type="entry name" value="SH2 domain"/>
    <property type="match status" value="1"/>
</dbReference>
<dbReference type="InterPro" id="IPR011993">
    <property type="entry name" value="PH-like_dom_sf"/>
</dbReference>
<dbReference type="InterPro" id="IPR006020">
    <property type="entry name" value="PTB/PI_dom"/>
</dbReference>
<dbReference type="InterPro" id="IPR000980">
    <property type="entry name" value="SH2"/>
</dbReference>
<dbReference type="InterPro" id="IPR036860">
    <property type="entry name" value="SH2_dom_sf"/>
</dbReference>
<dbReference type="PANTHER" id="PTHR15832:SF3">
    <property type="entry name" value="SH2 DOMAIN-CONTAINING PROTEIN 5"/>
    <property type="match status" value="1"/>
</dbReference>
<dbReference type="PANTHER" id="PTHR15832">
    <property type="entry name" value="SHC (SRC HOMOLOGY DOMAIN C-TERMINAL) ADAPTOR HOMOLOG"/>
    <property type="match status" value="1"/>
</dbReference>
<dbReference type="SUPFAM" id="SSF50729">
    <property type="entry name" value="PH domain-like"/>
    <property type="match status" value="1"/>
</dbReference>
<dbReference type="SUPFAM" id="SSF55550">
    <property type="entry name" value="SH2 domain"/>
    <property type="match status" value="1"/>
</dbReference>
<dbReference type="PROSITE" id="PS01179">
    <property type="entry name" value="PID"/>
    <property type="match status" value="1"/>
</dbReference>
<dbReference type="PROSITE" id="PS50001">
    <property type="entry name" value="SH2"/>
    <property type="match status" value="1"/>
</dbReference>
<keyword id="KW-1185">Reference proteome</keyword>
<keyword id="KW-0727">SH2 domain</keyword>
<keyword id="KW-0770">Synapse</keyword>
<organism>
    <name type="scientific">Pongo abelii</name>
    <name type="common">Sumatran orangutan</name>
    <name type="synonym">Pongo pygmaeus abelii</name>
    <dbReference type="NCBI Taxonomy" id="9601"/>
    <lineage>
        <taxon>Eukaryota</taxon>
        <taxon>Metazoa</taxon>
        <taxon>Chordata</taxon>
        <taxon>Craniata</taxon>
        <taxon>Vertebrata</taxon>
        <taxon>Euteleostomi</taxon>
        <taxon>Mammalia</taxon>
        <taxon>Eutheria</taxon>
        <taxon>Euarchontoglires</taxon>
        <taxon>Primates</taxon>
        <taxon>Haplorrhini</taxon>
        <taxon>Catarrhini</taxon>
        <taxon>Hominidae</taxon>
        <taxon>Pongo</taxon>
    </lineage>
</organism>
<name>SH2D5_PONAB</name>
<reference key="1">
    <citation type="submission" date="2008-02" db="EMBL/GenBank/DDBJ databases">
        <title>A 6x draft sequence assembly of the Pongo pygmaeus abelii genome.</title>
        <authorList>
            <person name="Wilson R.K."/>
            <person name="Mardis E."/>
        </authorList>
    </citation>
    <scope>NUCLEOTIDE SEQUENCE [LARGE SCALE GENOMIC DNA]</scope>
</reference>
<reference key="2">
    <citation type="submission" date="2004-11" db="EMBL/GenBank/DDBJ databases">
        <authorList>
            <consortium name="The German cDNA consortium"/>
        </authorList>
    </citation>
    <scope>NUCLEOTIDE SEQUENCE [LARGE SCALE MRNA] OF 83-423</scope>
    <source>
        <tissue>Brain cortex</tissue>
    </source>
</reference>
<feature type="chain" id="PRO_0000231583" description="SH2 domain-containing protein 5">
    <location>
        <begin position="1"/>
        <end position="423"/>
    </location>
</feature>
<feature type="domain" description="PID" evidence="3">
    <location>
        <begin position="28"/>
        <end position="146"/>
    </location>
</feature>
<feature type="domain" description="SH2" evidence="4">
    <location>
        <begin position="296"/>
        <end position="392"/>
    </location>
</feature>
<feature type="region of interest" description="Disordered" evidence="5">
    <location>
        <begin position="394"/>
        <end position="423"/>
    </location>
</feature>
<feature type="compositionally biased region" description="Low complexity" evidence="5">
    <location>
        <begin position="398"/>
        <end position="410"/>
    </location>
</feature>